<dbReference type="EC" id="6.1.1.20" evidence="1"/>
<dbReference type="EMBL" id="CP000024">
    <property type="protein sequence ID" value="AAV62835.1"/>
    <property type="status" value="ALT_INIT"/>
    <property type="molecule type" value="Genomic_DNA"/>
</dbReference>
<dbReference type="RefSeq" id="WP_041827153.1">
    <property type="nucleotide sequence ID" value="NC_006449.1"/>
</dbReference>
<dbReference type="SMR" id="Q5LZ72"/>
<dbReference type="GeneID" id="66899078"/>
<dbReference type="KEGG" id="stc:str1292"/>
<dbReference type="HOGENOM" id="CLU_016891_0_0_9"/>
<dbReference type="GO" id="GO:0009328">
    <property type="term" value="C:phenylalanine-tRNA ligase complex"/>
    <property type="evidence" value="ECO:0007669"/>
    <property type="project" value="TreeGrafter"/>
</dbReference>
<dbReference type="GO" id="GO:0005524">
    <property type="term" value="F:ATP binding"/>
    <property type="evidence" value="ECO:0007669"/>
    <property type="project" value="UniProtKB-UniRule"/>
</dbReference>
<dbReference type="GO" id="GO:0140096">
    <property type="term" value="F:catalytic activity, acting on a protein"/>
    <property type="evidence" value="ECO:0007669"/>
    <property type="project" value="UniProtKB-ARBA"/>
</dbReference>
<dbReference type="GO" id="GO:0000287">
    <property type="term" value="F:magnesium ion binding"/>
    <property type="evidence" value="ECO:0007669"/>
    <property type="project" value="UniProtKB-UniRule"/>
</dbReference>
<dbReference type="GO" id="GO:0004826">
    <property type="term" value="F:phenylalanine-tRNA ligase activity"/>
    <property type="evidence" value="ECO:0007669"/>
    <property type="project" value="UniProtKB-UniRule"/>
</dbReference>
<dbReference type="GO" id="GO:0016740">
    <property type="term" value="F:transferase activity"/>
    <property type="evidence" value="ECO:0007669"/>
    <property type="project" value="UniProtKB-ARBA"/>
</dbReference>
<dbReference type="GO" id="GO:0000049">
    <property type="term" value="F:tRNA binding"/>
    <property type="evidence" value="ECO:0007669"/>
    <property type="project" value="UniProtKB-KW"/>
</dbReference>
<dbReference type="GO" id="GO:0006432">
    <property type="term" value="P:phenylalanyl-tRNA aminoacylation"/>
    <property type="evidence" value="ECO:0007669"/>
    <property type="project" value="UniProtKB-UniRule"/>
</dbReference>
<dbReference type="CDD" id="cd00769">
    <property type="entry name" value="PheRS_beta_core"/>
    <property type="match status" value="1"/>
</dbReference>
<dbReference type="CDD" id="cd02796">
    <property type="entry name" value="tRNA_bind_bactPheRS"/>
    <property type="match status" value="1"/>
</dbReference>
<dbReference type="FunFam" id="2.40.50.140:FF:000045">
    <property type="entry name" value="Phenylalanine--tRNA ligase beta subunit"/>
    <property type="match status" value="1"/>
</dbReference>
<dbReference type="FunFam" id="3.30.56.10:FF:000002">
    <property type="entry name" value="Phenylalanine--tRNA ligase beta subunit"/>
    <property type="match status" value="1"/>
</dbReference>
<dbReference type="FunFam" id="3.30.70.380:FF:000001">
    <property type="entry name" value="Phenylalanine--tRNA ligase beta subunit"/>
    <property type="match status" value="1"/>
</dbReference>
<dbReference type="FunFam" id="3.30.930.10:FF:000022">
    <property type="entry name" value="Phenylalanine--tRNA ligase beta subunit"/>
    <property type="match status" value="1"/>
</dbReference>
<dbReference type="FunFam" id="3.50.40.10:FF:000001">
    <property type="entry name" value="Phenylalanine--tRNA ligase beta subunit"/>
    <property type="match status" value="1"/>
</dbReference>
<dbReference type="Gene3D" id="3.30.56.10">
    <property type="match status" value="2"/>
</dbReference>
<dbReference type="Gene3D" id="3.30.930.10">
    <property type="entry name" value="Bira Bifunctional Protein, Domain 2"/>
    <property type="match status" value="1"/>
</dbReference>
<dbReference type="Gene3D" id="3.30.70.380">
    <property type="entry name" value="Ferrodoxin-fold anticodon-binding domain"/>
    <property type="match status" value="1"/>
</dbReference>
<dbReference type="Gene3D" id="2.40.50.140">
    <property type="entry name" value="Nucleic acid-binding proteins"/>
    <property type="match status" value="1"/>
</dbReference>
<dbReference type="Gene3D" id="3.50.40.10">
    <property type="entry name" value="Phenylalanyl-trna Synthetase, Chain B, domain 3"/>
    <property type="match status" value="1"/>
</dbReference>
<dbReference type="HAMAP" id="MF_00283">
    <property type="entry name" value="Phe_tRNA_synth_beta1"/>
    <property type="match status" value="1"/>
</dbReference>
<dbReference type="InterPro" id="IPR045864">
    <property type="entry name" value="aa-tRNA-synth_II/BPL/LPL"/>
</dbReference>
<dbReference type="InterPro" id="IPR005146">
    <property type="entry name" value="B3/B4_tRNA-bd"/>
</dbReference>
<dbReference type="InterPro" id="IPR009061">
    <property type="entry name" value="DNA-bd_dom_put_sf"/>
</dbReference>
<dbReference type="InterPro" id="IPR005121">
    <property type="entry name" value="Fdx_antiC-bd"/>
</dbReference>
<dbReference type="InterPro" id="IPR036690">
    <property type="entry name" value="Fdx_antiC-bd_sf"/>
</dbReference>
<dbReference type="InterPro" id="IPR012340">
    <property type="entry name" value="NA-bd_OB-fold"/>
</dbReference>
<dbReference type="InterPro" id="IPR045060">
    <property type="entry name" value="Phe-tRNA-ligase_IIc_bsu"/>
</dbReference>
<dbReference type="InterPro" id="IPR004532">
    <property type="entry name" value="Phe-tRNA-ligase_IIc_bsu_bact"/>
</dbReference>
<dbReference type="InterPro" id="IPR020825">
    <property type="entry name" value="Phe-tRNA_synthase-like_B3/B4"/>
</dbReference>
<dbReference type="InterPro" id="IPR041616">
    <property type="entry name" value="PheRS_beta_core"/>
</dbReference>
<dbReference type="InterPro" id="IPR002547">
    <property type="entry name" value="tRNA-bd_dom"/>
</dbReference>
<dbReference type="InterPro" id="IPR033714">
    <property type="entry name" value="tRNA_bind_bactPheRS"/>
</dbReference>
<dbReference type="InterPro" id="IPR005147">
    <property type="entry name" value="tRNA_synthase_B5-dom"/>
</dbReference>
<dbReference type="NCBIfam" id="TIGR00472">
    <property type="entry name" value="pheT_bact"/>
    <property type="match status" value="1"/>
</dbReference>
<dbReference type="NCBIfam" id="NF045760">
    <property type="entry name" value="YtpR"/>
    <property type="match status" value="1"/>
</dbReference>
<dbReference type="PANTHER" id="PTHR10947:SF0">
    <property type="entry name" value="PHENYLALANINE--TRNA LIGASE BETA SUBUNIT"/>
    <property type="match status" value="1"/>
</dbReference>
<dbReference type="PANTHER" id="PTHR10947">
    <property type="entry name" value="PHENYLALANYL-TRNA SYNTHETASE BETA CHAIN AND LEUCINE-RICH REPEAT-CONTAINING PROTEIN 47"/>
    <property type="match status" value="1"/>
</dbReference>
<dbReference type="Pfam" id="PF03483">
    <property type="entry name" value="B3_4"/>
    <property type="match status" value="1"/>
</dbReference>
<dbReference type="Pfam" id="PF03484">
    <property type="entry name" value="B5"/>
    <property type="match status" value="1"/>
</dbReference>
<dbReference type="Pfam" id="PF03147">
    <property type="entry name" value="FDX-ACB"/>
    <property type="match status" value="1"/>
</dbReference>
<dbReference type="Pfam" id="PF01588">
    <property type="entry name" value="tRNA_bind"/>
    <property type="match status" value="1"/>
</dbReference>
<dbReference type="Pfam" id="PF17759">
    <property type="entry name" value="tRNA_synthFbeta"/>
    <property type="match status" value="1"/>
</dbReference>
<dbReference type="SMART" id="SM00873">
    <property type="entry name" value="B3_4"/>
    <property type="match status" value="1"/>
</dbReference>
<dbReference type="SMART" id="SM00874">
    <property type="entry name" value="B5"/>
    <property type="match status" value="1"/>
</dbReference>
<dbReference type="SMART" id="SM00896">
    <property type="entry name" value="FDX-ACB"/>
    <property type="match status" value="1"/>
</dbReference>
<dbReference type="SUPFAM" id="SSF54991">
    <property type="entry name" value="Anticodon-binding domain of PheRS"/>
    <property type="match status" value="1"/>
</dbReference>
<dbReference type="SUPFAM" id="SSF55681">
    <property type="entry name" value="Class II aaRS and biotin synthetases"/>
    <property type="match status" value="1"/>
</dbReference>
<dbReference type="SUPFAM" id="SSF50249">
    <property type="entry name" value="Nucleic acid-binding proteins"/>
    <property type="match status" value="1"/>
</dbReference>
<dbReference type="SUPFAM" id="SSF56037">
    <property type="entry name" value="PheT/TilS domain"/>
    <property type="match status" value="1"/>
</dbReference>
<dbReference type="SUPFAM" id="SSF46955">
    <property type="entry name" value="Putative DNA-binding domain"/>
    <property type="match status" value="1"/>
</dbReference>
<dbReference type="PROSITE" id="PS51483">
    <property type="entry name" value="B5"/>
    <property type="match status" value="1"/>
</dbReference>
<dbReference type="PROSITE" id="PS51447">
    <property type="entry name" value="FDX_ACB"/>
    <property type="match status" value="1"/>
</dbReference>
<dbReference type="PROSITE" id="PS50886">
    <property type="entry name" value="TRBD"/>
    <property type="match status" value="1"/>
</dbReference>
<sequence length="802" mass="87224">MLVSYKWLKELVDVDVTTAELAEKMSTTGIEVEGVKTPAEGLSKLVVGHVLSCEDVPETHLHLCQVDTGDAEGPRQIVCGAPNITAGIKVIVAIPGARIADNYKIKKGKIRGMESLGMICSLAELGLPDSIIPKEFADGIQILPEDAVPGDSIFPYLDLDDEIIELSITPNRADALSMRGVAHEVAAIYGKSVHFPEKTVTEDSKPASDKISVAIESDKVTTYASRVVENVTVQPSPQWLQNLLMNAGIRPINNVVDVTNYVLLYFGQPMHAFDLDKLEESHIVARDAREGEKLVTLDGEERELTAEDIVITVADKPVSLGGIMGGASTEIDNNSKNVVLEAAVFDGKSVRKTSSRLNLRSESSSRFEKGVNNDTVLEALDFAAAMLQELANGSVLAGRVQAGSVDTEPVQVSTSLDYVNVRLGTELTFADIEDVFAKLGFGLTGDADRFTVSVPRRRWDISIQADLVEEIARIYGYEKLPTTLPEAAGTSGELTKTQTLRRKVRTIAEGAGLTEIISYTLTTPEKAVEFAATPSNLTELMWPMTVDRSALRQNLVSGMLDTVAYNVNRKNSNVAIYEIGKVFEQNGNPKEELPNEINTFAFAISGLVAEKDFQTKATPVDFFYAKGIIEALFNKLEVSVDYVATKDLASMHPGRTAAIVLDGQTIGFLGQVHPQTAKNYGIPETYVAEINLSAVEDALKPAQPFVEITKFPAVSRDIALLLKADITHQEVLDAIYSAGVKRLIAVKLFDVYTGEKLGAGMKSMAYSLTFQNPNDNLTDEEVAKYMEKITKALTEKVEAEVR</sequence>
<protein>
    <recommendedName>
        <fullName evidence="1">Phenylalanine--tRNA ligase beta subunit</fullName>
        <ecNumber evidence="1">6.1.1.20</ecNumber>
    </recommendedName>
    <alternativeName>
        <fullName evidence="1">Phenylalanyl-tRNA synthetase beta subunit</fullName>
        <shortName evidence="1">PheRS</shortName>
    </alternativeName>
</protein>
<name>SYFB_STRT1</name>
<accession>Q5LZ72</accession>
<reference key="1">
    <citation type="journal article" date="2004" name="Nat. Biotechnol.">
        <title>Complete sequence and comparative genome analysis of the dairy bacterium Streptococcus thermophilus.</title>
        <authorList>
            <person name="Bolotin A."/>
            <person name="Quinquis B."/>
            <person name="Renault P."/>
            <person name="Sorokin A."/>
            <person name="Ehrlich S.D."/>
            <person name="Kulakauskas S."/>
            <person name="Lapidus A."/>
            <person name="Goltsman E."/>
            <person name="Mazur M."/>
            <person name="Pusch G.D."/>
            <person name="Fonstein M."/>
            <person name="Overbeek R."/>
            <person name="Kyprides N."/>
            <person name="Purnelle B."/>
            <person name="Prozzi D."/>
            <person name="Ngui K."/>
            <person name="Masuy D."/>
            <person name="Hancy F."/>
            <person name="Burteau S."/>
            <person name="Boutry M."/>
            <person name="Delcour J."/>
            <person name="Goffeau A."/>
            <person name="Hols P."/>
        </authorList>
    </citation>
    <scope>NUCLEOTIDE SEQUENCE [LARGE SCALE GENOMIC DNA]</scope>
    <source>
        <strain>CNRZ 1066</strain>
    </source>
</reference>
<comment type="catalytic activity">
    <reaction evidence="1">
        <text>tRNA(Phe) + L-phenylalanine + ATP = L-phenylalanyl-tRNA(Phe) + AMP + diphosphate + H(+)</text>
        <dbReference type="Rhea" id="RHEA:19413"/>
        <dbReference type="Rhea" id="RHEA-COMP:9668"/>
        <dbReference type="Rhea" id="RHEA-COMP:9699"/>
        <dbReference type="ChEBI" id="CHEBI:15378"/>
        <dbReference type="ChEBI" id="CHEBI:30616"/>
        <dbReference type="ChEBI" id="CHEBI:33019"/>
        <dbReference type="ChEBI" id="CHEBI:58095"/>
        <dbReference type="ChEBI" id="CHEBI:78442"/>
        <dbReference type="ChEBI" id="CHEBI:78531"/>
        <dbReference type="ChEBI" id="CHEBI:456215"/>
        <dbReference type="EC" id="6.1.1.20"/>
    </reaction>
</comment>
<comment type="cofactor">
    <cofactor evidence="1">
        <name>Mg(2+)</name>
        <dbReference type="ChEBI" id="CHEBI:18420"/>
    </cofactor>
    <text evidence="1">Binds 2 magnesium ions per tetramer.</text>
</comment>
<comment type="subunit">
    <text evidence="1">Tetramer of two alpha and two beta subunits.</text>
</comment>
<comment type="subcellular location">
    <subcellularLocation>
        <location>Cytoplasm</location>
    </subcellularLocation>
</comment>
<comment type="similarity">
    <text evidence="1">Belongs to the phenylalanyl-tRNA synthetase beta subunit family. Type 1 subfamily.</text>
</comment>
<comment type="sequence caution" evidence="2">
    <conflict type="erroneous initiation">
        <sequence resource="EMBL-CDS" id="AAV62835"/>
    </conflict>
</comment>
<gene>
    <name evidence="1" type="primary">pheT</name>
    <name type="ordered locus">str1292</name>
</gene>
<proteinExistence type="inferred from homology"/>
<feature type="chain" id="PRO_0000126968" description="Phenylalanine--tRNA ligase beta subunit">
    <location>
        <begin position="1"/>
        <end position="802"/>
    </location>
</feature>
<feature type="domain" description="tRNA-binding" evidence="1">
    <location>
        <begin position="39"/>
        <end position="154"/>
    </location>
</feature>
<feature type="domain" description="B5" evidence="1">
    <location>
        <begin position="407"/>
        <end position="482"/>
    </location>
</feature>
<feature type="domain" description="FDX-ACB" evidence="1">
    <location>
        <begin position="709"/>
        <end position="802"/>
    </location>
</feature>
<feature type="binding site" evidence="1">
    <location>
        <position position="460"/>
    </location>
    <ligand>
        <name>Mg(2+)</name>
        <dbReference type="ChEBI" id="CHEBI:18420"/>
        <note>shared with alpha subunit</note>
    </ligand>
</feature>
<feature type="binding site" evidence="1">
    <location>
        <position position="466"/>
    </location>
    <ligand>
        <name>Mg(2+)</name>
        <dbReference type="ChEBI" id="CHEBI:18420"/>
        <note>shared with alpha subunit</note>
    </ligand>
</feature>
<feature type="binding site" evidence="1">
    <location>
        <position position="469"/>
    </location>
    <ligand>
        <name>Mg(2+)</name>
        <dbReference type="ChEBI" id="CHEBI:18420"/>
        <note>shared with alpha subunit</note>
    </ligand>
</feature>
<feature type="binding site" evidence="1">
    <location>
        <position position="470"/>
    </location>
    <ligand>
        <name>Mg(2+)</name>
        <dbReference type="ChEBI" id="CHEBI:18420"/>
        <note>shared with alpha subunit</note>
    </ligand>
</feature>
<keyword id="KW-0030">Aminoacyl-tRNA synthetase</keyword>
<keyword id="KW-0067">ATP-binding</keyword>
<keyword id="KW-0963">Cytoplasm</keyword>
<keyword id="KW-0436">Ligase</keyword>
<keyword id="KW-0460">Magnesium</keyword>
<keyword id="KW-0479">Metal-binding</keyword>
<keyword id="KW-0547">Nucleotide-binding</keyword>
<keyword id="KW-0648">Protein biosynthesis</keyword>
<keyword id="KW-0694">RNA-binding</keyword>
<keyword id="KW-0820">tRNA-binding</keyword>
<organism>
    <name type="scientific">Streptococcus thermophilus (strain CNRZ 1066)</name>
    <dbReference type="NCBI Taxonomy" id="299768"/>
    <lineage>
        <taxon>Bacteria</taxon>
        <taxon>Bacillati</taxon>
        <taxon>Bacillota</taxon>
        <taxon>Bacilli</taxon>
        <taxon>Lactobacillales</taxon>
        <taxon>Streptococcaceae</taxon>
        <taxon>Streptococcus</taxon>
    </lineage>
</organism>
<evidence type="ECO:0000255" key="1">
    <source>
        <dbReference type="HAMAP-Rule" id="MF_00283"/>
    </source>
</evidence>
<evidence type="ECO:0000305" key="2"/>